<reference key="1">
    <citation type="journal article" date="1994" name="J. Biol. Chem.">
        <title>cDNA cloning and expression of rat and human protein geranylgeranyltransferase type-I.</title>
        <authorList>
            <person name="Zhang F.L."/>
            <person name="Diehl R.E."/>
            <person name="Kohl N.E."/>
            <person name="Gibbs J.B."/>
            <person name="Giros B."/>
            <person name="Casey P.J."/>
            <person name="Omer C.A."/>
        </authorList>
    </citation>
    <scope>NUCLEOTIDE SEQUENCE [MRNA] (ISOFORM 1)</scope>
    <scope>FUNCTION</scope>
    <scope>CATALYTIC ACTIVITY</scope>
    <scope>SUBUNIT</scope>
    <source>
        <tissue>Kidney</tissue>
        <tissue>Placenta</tissue>
    </source>
</reference>
<reference key="2">
    <citation type="submission" date="2004-10" db="EMBL/GenBank/DDBJ databases">
        <authorList>
            <person name="Li H."/>
            <person name="Ke R."/>
            <person name="Nong W."/>
            <person name="Shen C."/>
            <person name="Zhong G."/>
            <person name="Zhou G."/>
            <person name="Lin L."/>
            <person name="Yang S."/>
        </authorList>
    </citation>
    <scope>NUCLEOTIDE SEQUENCE [LARGE SCALE MRNA] (ISOFORM 2)</scope>
</reference>
<reference key="3">
    <citation type="journal article" date="2004" name="Nature">
        <title>The DNA sequence and comparative analysis of human chromosome 5.</title>
        <authorList>
            <person name="Schmutz J."/>
            <person name="Martin J."/>
            <person name="Terry A."/>
            <person name="Couronne O."/>
            <person name="Grimwood J."/>
            <person name="Lowry S."/>
            <person name="Gordon L.A."/>
            <person name="Scott D."/>
            <person name="Xie G."/>
            <person name="Huang W."/>
            <person name="Hellsten U."/>
            <person name="Tran-Gyamfi M."/>
            <person name="She X."/>
            <person name="Prabhakar S."/>
            <person name="Aerts A."/>
            <person name="Altherr M."/>
            <person name="Bajorek E."/>
            <person name="Black S."/>
            <person name="Branscomb E."/>
            <person name="Caoile C."/>
            <person name="Challacombe J.F."/>
            <person name="Chan Y.M."/>
            <person name="Denys M."/>
            <person name="Detter J.C."/>
            <person name="Escobar J."/>
            <person name="Flowers D."/>
            <person name="Fotopulos D."/>
            <person name="Glavina T."/>
            <person name="Gomez M."/>
            <person name="Gonzales E."/>
            <person name="Goodstein D."/>
            <person name="Grigoriev I."/>
            <person name="Groza M."/>
            <person name="Hammon N."/>
            <person name="Hawkins T."/>
            <person name="Haydu L."/>
            <person name="Israni S."/>
            <person name="Jett J."/>
            <person name="Kadner K."/>
            <person name="Kimball H."/>
            <person name="Kobayashi A."/>
            <person name="Lopez F."/>
            <person name="Lou Y."/>
            <person name="Martinez D."/>
            <person name="Medina C."/>
            <person name="Morgan J."/>
            <person name="Nandkeshwar R."/>
            <person name="Noonan J.P."/>
            <person name="Pitluck S."/>
            <person name="Pollard M."/>
            <person name="Predki P."/>
            <person name="Priest J."/>
            <person name="Ramirez L."/>
            <person name="Retterer J."/>
            <person name="Rodriguez A."/>
            <person name="Rogers S."/>
            <person name="Salamov A."/>
            <person name="Salazar A."/>
            <person name="Thayer N."/>
            <person name="Tice H."/>
            <person name="Tsai M."/>
            <person name="Ustaszewska A."/>
            <person name="Vo N."/>
            <person name="Wheeler J."/>
            <person name="Wu K."/>
            <person name="Yang J."/>
            <person name="Dickson M."/>
            <person name="Cheng J.-F."/>
            <person name="Eichler E.E."/>
            <person name="Olsen A."/>
            <person name="Pennacchio L.A."/>
            <person name="Rokhsar D.S."/>
            <person name="Richardson P."/>
            <person name="Lucas S.M."/>
            <person name="Myers R.M."/>
            <person name="Rubin E.M."/>
        </authorList>
    </citation>
    <scope>NUCLEOTIDE SEQUENCE [LARGE SCALE GENOMIC DNA]</scope>
</reference>
<reference key="4">
    <citation type="journal article" date="2011" name="BMC Syst. Biol.">
        <title>Initial characterization of the human central proteome.</title>
        <authorList>
            <person name="Burkard T.R."/>
            <person name="Planyavsky M."/>
            <person name="Kaupe I."/>
            <person name="Breitwieser F.P."/>
            <person name="Buerckstuemmer T."/>
            <person name="Bennett K.L."/>
            <person name="Superti-Furga G."/>
            <person name="Colinge J."/>
        </authorList>
    </citation>
    <scope>IDENTIFICATION BY MASS SPECTROMETRY [LARGE SCALE ANALYSIS]</scope>
</reference>
<comment type="function">
    <text evidence="3">Catalyzes the transfer of a geranyl-geranyl moiety from geranyl-geranyl pyrophosphate to a cysteine at the fourth position from the C-terminus of proteins having the C-terminal sequence Cys-aliphatic-aliphatic-X. Known substrates include RAC1, RAC2, RAP1A and RAP1B.</text>
</comment>
<comment type="catalytic activity">
    <reaction evidence="3">
        <text>geranylgeranyl diphosphate + L-cysteinyl-[protein] = S-geranylgeranyl-L-cysteinyl-[protein] + diphosphate</text>
        <dbReference type="Rhea" id="RHEA:21240"/>
        <dbReference type="Rhea" id="RHEA-COMP:10131"/>
        <dbReference type="Rhea" id="RHEA-COMP:11537"/>
        <dbReference type="ChEBI" id="CHEBI:29950"/>
        <dbReference type="ChEBI" id="CHEBI:33019"/>
        <dbReference type="ChEBI" id="CHEBI:57533"/>
        <dbReference type="ChEBI" id="CHEBI:86021"/>
        <dbReference type="EC" id="2.5.1.59"/>
    </reaction>
</comment>
<comment type="cofactor">
    <cofactor evidence="2">
        <name>Zn(2+)</name>
        <dbReference type="ChEBI" id="CHEBI:29105"/>
    </cofactor>
    <text evidence="2">Binds 1 zinc ion per subunit.</text>
</comment>
<comment type="cofactor">
    <cofactor evidence="1">
        <name>Mg(2+)</name>
        <dbReference type="ChEBI" id="CHEBI:18420"/>
    </cofactor>
</comment>
<comment type="subunit">
    <text evidence="3">Heterodimer of FNTA and PGGT1B. PGGT1B mediates interaction with substrate peptides.</text>
</comment>
<comment type="interaction">
    <interactant intactId="EBI-8456634">
        <id>P53609</id>
    </interactant>
    <interactant intactId="EBI-602336">
        <id>P49354</id>
        <label>FNTA</label>
    </interactant>
    <organismsDiffer>false</organismsDiffer>
    <experiments>10</experiments>
</comment>
<comment type="alternative products">
    <event type="alternative splicing"/>
    <isoform>
        <id>P53609-1</id>
        <name>1</name>
        <sequence type="displayed"/>
    </isoform>
    <isoform>
        <id>P53609-2</id>
        <name>2</name>
        <sequence type="described" ref="VSP_021827"/>
    </isoform>
</comment>
<comment type="similarity">
    <text evidence="5">Belongs to the protein prenyltransferase subunit beta family.</text>
</comment>
<proteinExistence type="evidence at protein level"/>
<organism>
    <name type="scientific">Homo sapiens</name>
    <name type="common">Human</name>
    <dbReference type="NCBI Taxonomy" id="9606"/>
    <lineage>
        <taxon>Eukaryota</taxon>
        <taxon>Metazoa</taxon>
        <taxon>Chordata</taxon>
        <taxon>Craniata</taxon>
        <taxon>Vertebrata</taxon>
        <taxon>Euteleostomi</taxon>
        <taxon>Mammalia</taxon>
        <taxon>Eutheria</taxon>
        <taxon>Euarchontoglires</taxon>
        <taxon>Primates</taxon>
        <taxon>Haplorrhini</taxon>
        <taxon>Catarrhini</taxon>
        <taxon>Hominidae</taxon>
        <taxon>Homo</taxon>
    </lineage>
</organism>
<name>PGTB1_HUMAN</name>
<keyword id="KW-0025">Alternative splicing</keyword>
<keyword id="KW-0460">Magnesium</keyword>
<keyword id="KW-0479">Metal-binding</keyword>
<keyword id="KW-0637">Prenyltransferase</keyword>
<keyword id="KW-1267">Proteomics identification</keyword>
<keyword id="KW-1185">Reference proteome</keyword>
<keyword id="KW-0677">Repeat</keyword>
<keyword id="KW-0808">Transferase</keyword>
<keyword id="KW-0862">Zinc</keyword>
<sequence length="377" mass="42368">MAATEDERLAGSGEGERLDFLRDRHVRFFQRCLQVLPERYSSLETSRLTIAFFALSGLDMLDSLDVVNKDDIIEWIYSLQVLPTEDRSNLNRCGFRGSSYLGIPFNPSKAPGTAHPYDSGHIAMTYTGLSCLVILGDDLSRVNKEACLAGLRALQLEDGSFCAVPEGSENDMRFVYCASCICYMLNNWSGMDMKKAITYIRRSMSYDNGLAQGAGLESHGGSTFCGIASLCLMGKLEEVFSEKELNRIKRWCIMRQQNGYHGRPNKPVDTCYSFWVGATLKLLKIFQYTNFEKNRNYILSTQDRLVGGFAKWPDSHPDALHAYFGICGLSLMEESGICKVHPALNVSTRTSERLLDLHQSWKTKDSKQCSENVHIST</sequence>
<gene>
    <name type="primary">PGGT1B</name>
</gene>
<feature type="chain" id="PRO_0000119769" description="Geranylgeranyl transferase type-1 subunit beta">
    <location>
        <begin position="1"/>
        <end position="377"/>
    </location>
</feature>
<feature type="repeat" description="PFTB 1">
    <location>
        <begin position="144"/>
        <end position="186"/>
    </location>
</feature>
<feature type="repeat" description="PFTB 2">
    <location>
        <begin position="193"/>
        <end position="234"/>
    </location>
</feature>
<feature type="repeat" description="PFTB 3">
    <location>
        <begin position="245"/>
        <end position="284"/>
    </location>
</feature>
<feature type="repeat" description="PFTB 4">
    <location>
        <begin position="291"/>
        <end position="333"/>
    </location>
</feature>
<feature type="binding site" evidence="2">
    <location>
        <begin position="219"/>
        <end position="221"/>
    </location>
    <ligand>
        <name>geranylgeranyl diphosphate</name>
        <dbReference type="ChEBI" id="CHEBI:57533"/>
    </ligand>
</feature>
<feature type="binding site" evidence="2">
    <location>
        <begin position="263"/>
        <end position="266"/>
    </location>
    <ligand>
        <name>geranylgeranyl diphosphate</name>
        <dbReference type="ChEBI" id="CHEBI:57533"/>
    </ligand>
</feature>
<feature type="binding site" evidence="2">
    <location>
        <position position="269"/>
    </location>
    <ligand>
        <name>Zn(2+)</name>
        <dbReference type="ChEBI" id="CHEBI:29105"/>
        <note>catalytic</note>
    </ligand>
</feature>
<feature type="binding site" evidence="2">
    <location>
        <position position="271"/>
    </location>
    <ligand>
        <name>Zn(2+)</name>
        <dbReference type="ChEBI" id="CHEBI:29105"/>
        <note>catalytic</note>
    </ligand>
</feature>
<feature type="binding site" evidence="2">
    <location>
        <begin position="272"/>
        <end position="275"/>
    </location>
    <ligand>
        <name>geranylgeranyl diphosphate</name>
        <dbReference type="ChEBI" id="CHEBI:57533"/>
    </ligand>
</feature>
<feature type="binding site" evidence="2">
    <location>
        <position position="321"/>
    </location>
    <ligand>
        <name>Zn(2+)</name>
        <dbReference type="ChEBI" id="CHEBI:29105"/>
        <note>catalytic</note>
    </ligand>
</feature>
<feature type="splice variant" id="VSP_021827" description="In isoform 2." evidence="4">
    <location>
        <begin position="205"/>
        <end position="281"/>
    </location>
</feature>
<feature type="sequence variant" id="VAR_034381" description="In dbSNP:rs34918686.">
    <original>I</original>
    <variation>V</variation>
    <location>
        <position position="103"/>
    </location>
</feature>
<feature type="sequence conflict" description="In Ref. 1; AAA35888 and 2; AAV98360." evidence="5" ref="1 2">
    <original>A</original>
    <variation>V</variation>
    <location>
        <position position="2"/>
    </location>
</feature>
<feature type="sequence conflict" description="In Ref. 2; AAV98360." evidence="5" ref="2">
    <original>Y</original>
    <variation>C</variation>
    <location>
        <position position="126"/>
    </location>
</feature>
<evidence type="ECO:0000250" key="1">
    <source>
        <dbReference type="UniProtKB" id="P18898"/>
    </source>
</evidence>
<evidence type="ECO:0000250" key="2">
    <source>
        <dbReference type="UniProtKB" id="P53610"/>
    </source>
</evidence>
<evidence type="ECO:0000269" key="3">
    <source>
    </source>
</evidence>
<evidence type="ECO:0000303" key="4">
    <source ref="2"/>
</evidence>
<evidence type="ECO:0000305" key="5"/>
<protein>
    <recommendedName>
        <fullName>Geranylgeranyl transferase type-1 subunit beta</fullName>
        <ecNumber>2.5.1.59</ecNumber>
    </recommendedName>
    <alternativeName>
        <fullName>Geranylgeranyl transferase type I subunit beta</fullName>
        <shortName>GGTase-I-beta</shortName>
    </alternativeName>
    <alternativeName>
        <fullName>Type I protein geranyl-geranyltransferase subunit beta</fullName>
    </alternativeName>
</protein>
<accession>P53609</accession>
<accession>Q5MJP9</accession>
<dbReference type="EC" id="2.5.1.59"/>
<dbReference type="EMBL" id="L25441">
    <property type="protein sequence ID" value="AAA35888.1"/>
    <property type="molecule type" value="mRNA"/>
</dbReference>
<dbReference type="EMBL" id="AY780790">
    <property type="protein sequence ID" value="AAV98360.1"/>
    <property type="molecule type" value="mRNA"/>
</dbReference>
<dbReference type="EMBL" id="AC008494">
    <property type="status" value="NOT_ANNOTATED_CDS"/>
    <property type="molecule type" value="Genomic_DNA"/>
</dbReference>
<dbReference type="CCDS" id="CCDS4116.1">
    <molecule id="P53609-1"/>
</dbReference>
<dbReference type="PIR" id="A53044">
    <property type="entry name" value="A53044"/>
</dbReference>
<dbReference type="RefSeq" id="NP_005014.2">
    <molecule id="P53609-1"/>
    <property type="nucleotide sequence ID" value="NM_005023.4"/>
</dbReference>
<dbReference type="SMR" id="P53609"/>
<dbReference type="BioGRID" id="111250">
    <property type="interactions" value="38"/>
</dbReference>
<dbReference type="ComplexPortal" id="CPX-2157">
    <property type="entry name" value="Protein geranylgeranyl transferase type I complex"/>
</dbReference>
<dbReference type="CORUM" id="P53609"/>
<dbReference type="FunCoup" id="P53609">
    <property type="interactions" value="476"/>
</dbReference>
<dbReference type="IntAct" id="P53609">
    <property type="interactions" value="10"/>
</dbReference>
<dbReference type="MINT" id="P53609"/>
<dbReference type="STRING" id="9606.ENSP00000404676"/>
<dbReference type="BindingDB" id="P53609"/>
<dbReference type="ChEMBL" id="CHEMBL4135"/>
<dbReference type="DrugBank" id="DB08180">
    <property type="generic name" value="2-[METHYL-(5-GERANYL-4-METHYL-PENT-3-ENYL)-AMINO]-ETHYL-DIPHOSPHATE"/>
</dbReference>
<dbReference type="DrugBank" id="DB07841">
    <property type="generic name" value="Geranylgeranyl diphosphate"/>
</dbReference>
<dbReference type="DrugBank" id="DB07227">
    <property type="generic name" value="L-778123"/>
</dbReference>
<dbReference type="iPTMnet" id="P53609"/>
<dbReference type="MetOSite" id="P53609"/>
<dbReference type="PhosphoSitePlus" id="P53609"/>
<dbReference type="BioMuta" id="PGGT1B"/>
<dbReference type="DMDM" id="259016302"/>
<dbReference type="jPOST" id="P53609"/>
<dbReference type="MassIVE" id="P53609"/>
<dbReference type="PaxDb" id="9606-ENSP00000404676"/>
<dbReference type="PeptideAtlas" id="P53609"/>
<dbReference type="ProteomicsDB" id="56589">
    <molecule id="P53609-1"/>
</dbReference>
<dbReference type="ProteomicsDB" id="56590">
    <molecule id="P53609-2"/>
</dbReference>
<dbReference type="Pumba" id="P53609"/>
<dbReference type="Antibodypedia" id="25414">
    <property type="antibodies" value="75 antibodies from 13 providers"/>
</dbReference>
<dbReference type="DNASU" id="5229"/>
<dbReference type="Ensembl" id="ENST00000379615.3">
    <molecule id="P53609-2"/>
    <property type="protein sequence ID" value="ENSP00000368935.3"/>
    <property type="gene ID" value="ENSG00000164219.10"/>
</dbReference>
<dbReference type="Ensembl" id="ENST00000419445.6">
    <molecule id="P53609-1"/>
    <property type="protein sequence ID" value="ENSP00000404676.1"/>
    <property type="gene ID" value="ENSG00000164219.10"/>
</dbReference>
<dbReference type="GeneID" id="5229"/>
<dbReference type="KEGG" id="hsa:5229"/>
<dbReference type="MANE-Select" id="ENST00000419445.6">
    <property type="protein sequence ID" value="ENSP00000404676.1"/>
    <property type="RefSeq nucleotide sequence ID" value="NM_005023.4"/>
    <property type="RefSeq protein sequence ID" value="NP_005014.2"/>
</dbReference>
<dbReference type="UCSC" id="uc003kqw.5">
    <molecule id="P53609-1"/>
    <property type="organism name" value="human"/>
</dbReference>
<dbReference type="AGR" id="HGNC:8895"/>
<dbReference type="CTD" id="5229"/>
<dbReference type="DisGeNET" id="5229"/>
<dbReference type="GeneCards" id="PGGT1B"/>
<dbReference type="HGNC" id="HGNC:8895">
    <property type="gene designation" value="PGGT1B"/>
</dbReference>
<dbReference type="HPA" id="ENSG00000164219">
    <property type="expression patterns" value="Low tissue specificity"/>
</dbReference>
<dbReference type="MIM" id="602031">
    <property type="type" value="gene"/>
</dbReference>
<dbReference type="neXtProt" id="NX_P53609"/>
<dbReference type="OpenTargets" id="ENSG00000164219"/>
<dbReference type="PharmGKB" id="PA33233"/>
<dbReference type="VEuPathDB" id="HostDB:ENSG00000164219"/>
<dbReference type="eggNOG" id="KOG0367">
    <property type="taxonomic scope" value="Eukaryota"/>
</dbReference>
<dbReference type="GeneTree" id="ENSGT00950000183128"/>
<dbReference type="HOGENOM" id="CLU_028946_2_2_1"/>
<dbReference type="InParanoid" id="P53609"/>
<dbReference type="OMA" id="RWCLMRQ"/>
<dbReference type="OrthoDB" id="24893at2759"/>
<dbReference type="PAN-GO" id="P53609">
    <property type="GO annotations" value="3 GO annotations based on evolutionary models"/>
</dbReference>
<dbReference type="PhylomeDB" id="P53609"/>
<dbReference type="TreeFam" id="TF105968"/>
<dbReference type="BRENDA" id="2.5.1.59">
    <property type="organism ID" value="2681"/>
</dbReference>
<dbReference type="PathwayCommons" id="P53609"/>
<dbReference type="SignaLink" id="P53609"/>
<dbReference type="BioGRID-ORCS" id="5229">
    <property type="hits" value="350 hits in 1164 CRISPR screens"/>
</dbReference>
<dbReference type="GenomeRNAi" id="5229"/>
<dbReference type="Pharos" id="P53609">
    <property type="development level" value="Tchem"/>
</dbReference>
<dbReference type="PRO" id="PR:P53609"/>
<dbReference type="Proteomes" id="UP000005640">
    <property type="component" value="Chromosome 5"/>
</dbReference>
<dbReference type="RNAct" id="P53609">
    <property type="molecule type" value="protein"/>
</dbReference>
<dbReference type="Bgee" id="ENSG00000164219">
    <property type="expression patterns" value="Expressed in oocyte and 199 other cell types or tissues"/>
</dbReference>
<dbReference type="GO" id="GO:0005953">
    <property type="term" value="C:CAAX-protein geranylgeranyltransferase complex"/>
    <property type="evidence" value="ECO:0000314"/>
    <property type="project" value="UniProtKB"/>
</dbReference>
<dbReference type="GO" id="GO:0004662">
    <property type="term" value="F:CAAX-protein geranylgeranyltransferase activity"/>
    <property type="evidence" value="ECO:0000250"/>
    <property type="project" value="UniProtKB"/>
</dbReference>
<dbReference type="GO" id="GO:0004661">
    <property type="term" value="F:protein geranylgeranyltransferase activity"/>
    <property type="evidence" value="ECO:0000314"/>
    <property type="project" value="UniProtKB"/>
</dbReference>
<dbReference type="GO" id="GO:0008270">
    <property type="term" value="F:zinc ion binding"/>
    <property type="evidence" value="ECO:0000250"/>
    <property type="project" value="UniProtKB"/>
</dbReference>
<dbReference type="GO" id="GO:0018344">
    <property type="term" value="P:protein geranylgeranylation"/>
    <property type="evidence" value="ECO:0000314"/>
    <property type="project" value="UniProtKB"/>
</dbReference>
<dbReference type="CDD" id="cd02895">
    <property type="entry name" value="GGTase-I"/>
    <property type="match status" value="1"/>
</dbReference>
<dbReference type="FunFam" id="1.50.10.20:FF:000005">
    <property type="entry name" value="Geranylgeranyl transferase type-1 subunit beta"/>
    <property type="match status" value="1"/>
</dbReference>
<dbReference type="Gene3D" id="1.50.10.20">
    <property type="match status" value="1"/>
</dbReference>
<dbReference type="InterPro" id="IPR041960">
    <property type="entry name" value="GGTase_I_beta"/>
</dbReference>
<dbReference type="InterPro" id="IPR045089">
    <property type="entry name" value="PGGT1B-like"/>
</dbReference>
<dbReference type="InterPro" id="IPR001330">
    <property type="entry name" value="Prenyltrans"/>
</dbReference>
<dbReference type="InterPro" id="IPR008930">
    <property type="entry name" value="Terpenoid_cyclase/PrenylTrfase"/>
</dbReference>
<dbReference type="PANTHER" id="PTHR11774">
    <property type="entry name" value="GERANYLGERANYL TRANSFERASE TYPE BETA SUBUNIT"/>
    <property type="match status" value="1"/>
</dbReference>
<dbReference type="PANTHER" id="PTHR11774:SF4">
    <property type="entry name" value="GERANYLGERANYL TRANSFERASE TYPE-1 SUBUNIT BETA"/>
    <property type="match status" value="1"/>
</dbReference>
<dbReference type="Pfam" id="PF00432">
    <property type="entry name" value="Prenyltrans"/>
    <property type="match status" value="1"/>
</dbReference>
<dbReference type="SFLD" id="SFLDG01015">
    <property type="entry name" value="Prenyltransferase_Like_1"/>
    <property type="match status" value="1"/>
</dbReference>
<dbReference type="SUPFAM" id="SSF48239">
    <property type="entry name" value="Terpenoid cyclases/Protein prenyltransferases"/>
    <property type="match status" value="1"/>
</dbReference>